<name>RL331_MYCUA</name>
<gene>
    <name evidence="1" type="primary">rpmG1</name>
    <name type="ordered locus">MUL_0719</name>
</gene>
<protein>
    <recommendedName>
        <fullName evidence="1">Large ribosomal subunit protein bL33A</fullName>
    </recommendedName>
    <alternativeName>
        <fullName evidence="1">50S ribosomal protein L33 1</fullName>
    </alternativeName>
</protein>
<evidence type="ECO:0000255" key="1">
    <source>
        <dbReference type="HAMAP-Rule" id="MF_00294"/>
    </source>
</evidence>
<organism>
    <name type="scientific">Mycobacterium ulcerans (strain Agy99)</name>
    <dbReference type="NCBI Taxonomy" id="362242"/>
    <lineage>
        <taxon>Bacteria</taxon>
        <taxon>Bacillati</taxon>
        <taxon>Actinomycetota</taxon>
        <taxon>Actinomycetes</taxon>
        <taxon>Mycobacteriales</taxon>
        <taxon>Mycobacteriaceae</taxon>
        <taxon>Mycobacterium</taxon>
        <taxon>Mycobacterium ulcerans group</taxon>
    </lineage>
</organism>
<dbReference type="EMBL" id="CP000325">
    <property type="protein sequence ID" value="ABL03370.1"/>
    <property type="molecule type" value="Genomic_DNA"/>
</dbReference>
<dbReference type="SMR" id="A0PM01"/>
<dbReference type="KEGG" id="mul:MUL_0719"/>
<dbReference type="eggNOG" id="COG0267">
    <property type="taxonomic scope" value="Bacteria"/>
</dbReference>
<dbReference type="HOGENOM" id="CLU_190949_0_2_11"/>
<dbReference type="Proteomes" id="UP000000765">
    <property type="component" value="Chromosome"/>
</dbReference>
<dbReference type="GO" id="GO:0005737">
    <property type="term" value="C:cytoplasm"/>
    <property type="evidence" value="ECO:0007669"/>
    <property type="project" value="UniProtKB-ARBA"/>
</dbReference>
<dbReference type="GO" id="GO:1990904">
    <property type="term" value="C:ribonucleoprotein complex"/>
    <property type="evidence" value="ECO:0007669"/>
    <property type="project" value="UniProtKB-KW"/>
</dbReference>
<dbReference type="GO" id="GO:0005840">
    <property type="term" value="C:ribosome"/>
    <property type="evidence" value="ECO:0007669"/>
    <property type="project" value="UniProtKB-KW"/>
</dbReference>
<dbReference type="GO" id="GO:0003735">
    <property type="term" value="F:structural constituent of ribosome"/>
    <property type="evidence" value="ECO:0007669"/>
    <property type="project" value="InterPro"/>
</dbReference>
<dbReference type="GO" id="GO:0006412">
    <property type="term" value="P:translation"/>
    <property type="evidence" value="ECO:0007669"/>
    <property type="project" value="UniProtKB-UniRule"/>
</dbReference>
<dbReference type="Gene3D" id="2.20.28.120">
    <property type="entry name" value="Ribosomal protein L33"/>
    <property type="match status" value="1"/>
</dbReference>
<dbReference type="HAMAP" id="MF_00294">
    <property type="entry name" value="Ribosomal_bL33"/>
    <property type="match status" value="1"/>
</dbReference>
<dbReference type="InterPro" id="IPR001705">
    <property type="entry name" value="Ribosomal_bL33"/>
</dbReference>
<dbReference type="InterPro" id="IPR018264">
    <property type="entry name" value="Ribosomal_bL33_CS"/>
</dbReference>
<dbReference type="InterPro" id="IPR038584">
    <property type="entry name" value="Ribosomal_bL33_sf"/>
</dbReference>
<dbReference type="InterPro" id="IPR011332">
    <property type="entry name" value="Ribosomal_zn-bd"/>
</dbReference>
<dbReference type="NCBIfam" id="NF001764">
    <property type="entry name" value="PRK00504.1"/>
    <property type="match status" value="1"/>
</dbReference>
<dbReference type="NCBIfam" id="NF001860">
    <property type="entry name" value="PRK00595.1"/>
    <property type="match status" value="1"/>
</dbReference>
<dbReference type="NCBIfam" id="TIGR01023">
    <property type="entry name" value="rpmG_bact"/>
    <property type="match status" value="1"/>
</dbReference>
<dbReference type="PANTHER" id="PTHR43168">
    <property type="entry name" value="50S RIBOSOMAL PROTEIN L33, CHLOROPLASTIC"/>
    <property type="match status" value="1"/>
</dbReference>
<dbReference type="PANTHER" id="PTHR43168:SF2">
    <property type="entry name" value="LARGE RIBOSOMAL SUBUNIT PROTEIN BL33C"/>
    <property type="match status" value="1"/>
</dbReference>
<dbReference type="Pfam" id="PF00471">
    <property type="entry name" value="Ribosomal_L33"/>
    <property type="match status" value="1"/>
</dbReference>
<dbReference type="SUPFAM" id="SSF57829">
    <property type="entry name" value="Zn-binding ribosomal proteins"/>
    <property type="match status" value="1"/>
</dbReference>
<dbReference type="PROSITE" id="PS00582">
    <property type="entry name" value="RIBOSOMAL_L33"/>
    <property type="match status" value="1"/>
</dbReference>
<reference key="1">
    <citation type="journal article" date="2007" name="Genome Res.">
        <title>Reductive evolution and niche adaptation inferred from the genome of Mycobacterium ulcerans, the causative agent of Buruli ulcer.</title>
        <authorList>
            <person name="Stinear T.P."/>
            <person name="Seemann T."/>
            <person name="Pidot S."/>
            <person name="Frigui W."/>
            <person name="Reysset G."/>
            <person name="Garnier T."/>
            <person name="Meurice G."/>
            <person name="Simon D."/>
            <person name="Bouchier C."/>
            <person name="Ma L."/>
            <person name="Tichit M."/>
            <person name="Porter J.L."/>
            <person name="Ryan J."/>
            <person name="Johnson P.D.R."/>
            <person name="Davies J.K."/>
            <person name="Jenkin G.A."/>
            <person name="Small P.L.C."/>
            <person name="Jones L.M."/>
            <person name="Tekaia F."/>
            <person name="Laval F."/>
            <person name="Daffe M."/>
            <person name="Parkhill J."/>
            <person name="Cole S.T."/>
        </authorList>
    </citation>
    <scope>NUCLEOTIDE SEQUENCE [LARGE SCALE GENOMIC DNA]</scope>
    <source>
        <strain>Agy99</strain>
    </source>
</reference>
<sequence length="55" mass="6513">MASSTDVRPKITLACEVCKHRNYITKKNRRNDPDRLELKKFCRNCGSHQAHRETR</sequence>
<feature type="chain" id="PRO_0000356566" description="Large ribosomal subunit protein bL33A">
    <location>
        <begin position="1"/>
        <end position="55"/>
    </location>
</feature>
<comment type="similarity">
    <text evidence="1">Belongs to the bacterial ribosomal protein bL33 family.</text>
</comment>
<keyword id="KW-0687">Ribonucleoprotein</keyword>
<keyword id="KW-0689">Ribosomal protein</keyword>
<accession>A0PM01</accession>
<proteinExistence type="inferred from homology"/>